<name>STING_EIDHE</name>
<accession>A0A291NUI5</accession>
<protein>
    <recommendedName>
        <fullName evidence="3">Stimulator of interferon genes protein</fullName>
        <shortName evidence="6">STING</shortName>
    </recommendedName>
</protein>
<evidence type="ECO:0000250" key="1">
    <source>
        <dbReference type="UniProtKB" id="E1C7U0"/>
    </source>
</evidence>
<evidence type="ECO:0000250" key="2">
    <source>
        <dbReference type="UniProtKB" id="Q3TBT3"/>
    </source>
</evidence>
<evidence type="ECO:0000250" key="3">
    <source>
        <dbReference type="UniProtKB" id="Q86WV6"/>
    </source>
</evidence>
<evidence type="ECO:0000255" key="4"/>
<evidence type="ECO:0000269" key="5">
    <source>
    </source>
</evidence>
<evidence type="ECO:0000303" key="6">
    <source>
    </source>
</evidence>
<evidence type="ECO:0000305" key="7"/>
<sequence>MSHSSLHPSIPWPRGHKAKVAAFVLLIVCLAALWKLGEPSDHLLQWLVLHLASLHLRLLFKRVCCLAEELCHIHPRYQGNYSRAVRACLGCPIRYGAVLLLSCYFYVSLPNTVDLPLTWMLAHLGLSEALNILLGLQSLTPAEISTICEQRNFNVAHGLAWSYYIGYLQLILPGLRARIHTYNQLHSNTLQGVGSHRLYILFPLDCGVLDDLSAADPNIRFLHELPRQSADRAGIKGRVYTNSVYELLEKGKPVGTCVLEYATPLQTLFAMSQDGRAGFSQEDRLEQAKLFCRTLEDILADAPESQKNCRLIVYQEPTEESDFSLSQEILKHLRQEEREEVTMGTAGTFVAPGSSTLHQEPELLISGMDQPLPLRTDIF</sequence>
<gene>
    <name evidence="3" type="primary">STING1</name>
    <name evidence="6" type="synonym">STING</name>
</gene>
<organism>
    <name type="scientific">Eidolon helvum</name>
    <name type="common">Straw-colored fruit bat</name>
    <dbReference type="NCBI Taxonomy" id="77214"/>
    <lineage>
        <taxon>Eukaryota</taxon>
        <taxon>Metazoa</taxon>
        <taxon>Chordata</taxon>
        <taxon>Craniata</taxon>
        <taxon>Vertebrata</taxon>
        <taxon>Euteleostomi</taxon>
        <taxon>Mammalia</taxon>
        <taxon>Eutheria</taxon>
        <taxon>Laurasiatheria</taxon>
        <taxon>Chiroptera</taxon>
        <taxon>Yinpterochiroptera</taxon>
        <taxon>Pteropodoidea</taxon>
        <taxon>Pteropodidae</taxon>
        <taxon>Pteropodinae</taxon>
        <taxon>Eidolon</taxon>
    </lineage>
</organism>
<proteinExistence type="evidence at protein level"/>
<comment type="function">
    <text evidence="3 5">Facilitator of innate immune signaling that acts as a sensor of cytosolic DNA from bacteria and viruses and promotes low production of type I interferon (IFN-alpha and IFN-beta) (PubMed:29478775). Compared to other mammals, STING1-dependent type I interferon induction is strongly reduced in bats, suggesting that the cGAS-STING pathway promotes a limited inflammatory response (PubMed:29478775). Innate immune response is triggered in response to non-CpG double-stranded DNA from viruses and bacteria delivered to the cytoplasm (By similarity). Acts by binding cyclic dinucleotides: recognizes and binds cyclic di-GMP (c-di-GMP), a second messenger produced by bacteria, cyclic UMP-AMP (2',3'-cUAMP), and cyclic GMP-AMP (cGAMP), a messenger produced by CGAS in response to DNA virus in the cytosol (By similarity). Upon binding to c-di-GMP, cUAMP or cGAMP, STING1 oligomerizes, translocates from the endoplasmic reticulum and is phosphorylated by TBK1 on the pLxIS motif, leading to recruitment and subsequent activation of the transcription factor IRF3 to induce expression of type I interferon and exert a potent anti-viral state (By similarity). In addition to promote the production of type I interferons, plays a direct role in autophagy (By similarity). Following cGAMP-binding, STING1 buds from the endoplasmic reticulum into COPII vesicles, which then form the endoplasmic reticulum-Golgi intermediate compartment (ERGIC) (By similarity). The ERGIC serves as the membrane source for WIPI2 recruitment and LC3 lipidation, leading to formation of autophagosomes that target cytosolic DNA or DNA viruses for degradation by the lysosome (By similarity). Promotes autophagy by acting as a proton channel that directs proton efflux from the Golgi to facilitate MAP1LC3B/LC3B lipidation (By similarity). The autophagy- and interferon-inducing activities can be uncoupled and autophagy induction is independent of TBK1 phosphorylation (By similarity).</text>
</comment>
<comment type="catalytic activity">
    <reaction evidence="3">
        <text>H(+)(in) = H(+)(out)</text>
        <dbReference type="Rhea" id="RHEA:34979"/>
        <dbReference type="ChEBI" id="CHEBI:15378"/>
    </reaction>
</comment>
<comment type="subunit">
    <text evidence="2 3">Homodimer; forms a homodimer in absence of cyclic nucleotide (c-di-GMP or cGAMP) (By similarity). Homotetramer; in presence of cyclic nucleotide (c-di-GMP or cGAMP), forms tetramers and higher-order oligomers through side-by-side packing (By similarity). Interacts (when phosphorylated) with IRF3; following activation and phosphorylation on the pLxIS motif by TBK1, recruits IRF3 (By similarity). Interacts with TBK1; when homodimer, leading to subsequent production of IFN-beta. Interacts (via transmembrane domain) with TMEM203 (By similarity).</text>
</comment>
<comment type="subcellular location">
    <subcellularLocation>
        <location evidence="2">Endoplasmic reticulum membrane</location>
        <topology evidence="4">Multi-pass membrane protein</topology>
    </subcellularLocation>
    <subcellularLocation>
        <location evidence="3">Cytoplasm</location>
        <location evidence="3">Perinuclear region</location>
    </subcellularLocation>
    <subcellularLocation>
        <location evidence="2">Endoplasmic reticulum-Golgi intermediate compartment membrane</location>
        <topology evidence="4">Multi-pass membrane protein</topology>
    </subcellularLocation>
    <subcellularLocation>
        <location evidence="3">Golgi apparatus membrane</location>
        <topology evidence="4">Multi-pass membrane protein</topology>
    </subcellularLocation>
    <subcellularLocation>
        <location evidence="2">Cytoplasmic vesicle</location>
        <location evidence="2">Autophagosome membrane</location>
        <topology evidence="4">Multi-pass membrane protein</topology>
    </subcellularLocation>
    <subcellularLocation>
        <location evidence="2">Mitochondrion outer membrane</location>
        <topology evidence="4">Multi-pass membrane protein</topology>
    </subcellularLocation>
    <subcellularLocation>
        <location evidence="2">Cell membrane</location>
        <topology evidence="4">Multi-pass membrane protein</topology>
    </subcellularLocation>
    <text evidence="2 3">In response to double-stranded DNA stimulation, translocates from the endoplasmic reticulum through the endoplasmic reticulum-Golgi intermediate compartment and Golgi to post-Golgi vesicles, where the kinase TBK1 is recruited (By similarity). Upon cGAMP-binding, translocates to the endoplasmic reticulum-Golgi intermediate compartment (ERGIC) in a process that is dependent on COPII vesicles; STING1-containing ERGIC serves as a membrane source for LC3 lipidation, which is a key step in autophagosome biogenesis. Localizes in the lysosome membrane in a TMEM203-dependent manner (By similarity).</text>
</comment>
<comment type="domain">
    <text evidence="1 3">In absence of cGAMP, the transmembrane and cytoplasmic regions interact to form an integrated, domain-swapped dimeric assembly (By similarity). In absence of cyclic nucleotide (c-di-GMP or cGAMP), the protein is autoinhibited by an intramolecular interaction between the cyclic dinucleotide-binding domain (CBD) and the C-terminal tail (CTT) (By similarity). Following cGAMP-binding, the cyclic dinucleotide-binding domain (CBD) is closed, leading to a 180 degrees rotation of the CBD domain relative to the transmembrane domain. This rotation is coupled to a conformational change in a loop on the side of the CBD dimer, which leads to the formation of the STING1 tetramer and higher-order oligomers through side-by-side packing (By similarity).</text>
</comment>
<comment type="domain">
    <text evidence="3">The pLxIS motif constitutes an IRF3-binding motif: following phosphorylation by TBK1, the phosphorylated pLxIS motif of STING1 recruits IRF3 (By similarity). IRF3 is then phosphorylated and activated by TBK1 to induce type-I interferons and other cytokines (By similarity).</text>
</comment>
<comment type="domain">
    <text evidence="3">The N-terminal domain interacts with glycerophospholipids and phospholipids.</text>
</comment>
<comment type="PTM">
    <text evidence="3 5">Phosphorylation by TBK1 leads to activation and production of IFN-beta (By similarity). Following cyclic nucleotide (c-di-GMP or cGAMP)-binding, activation and translocation from the endoplasmic reticulum, STING1 is phosphorylated by TBK1 at Ser-366 in the pLxIS motif (By similarity). The phosphorylated pLxIS motif constitutes an IRF3-binding motif, leading to recruitment of the transcription factor IRF3 to induce type-I interferons and other cytokines (By similarity). In contrast, lacks phosphorylation site at position 358, leading to reduced production of type-I interferons and other cytokines (PubMed:29478775).</text>
</comment>
<comment type="similarity">
    <text evidence="7">Belongs to the STING family.</text>
</comment>
<comment type="caution">
    <text evidence="5">The cGAS-STING pathway promotes a limited inflammatory response in bats (PubMed:29478775). This may be caused by the absence of the phosphorylation site at position 358, which is required to production of type-I interferons and other cytokines in other species (PubMed:29478775). The dampened cGAS-STING pathway may explain why bats show an increased tolerance to highly pathogenic viruses, such as coronaviruses, and serve as a virus reservoir (PubMed:29478775).</text>
</comment>
<reference key="1">
    <citation type="journal article" date="2018" name="Cell Host Microbe">
        <title>Dampened STING-dependent interferon activation in bats.</title>
        <authorList>
            <person name="Xie J."/>
            <person name="Li Y."/>
            <person name="Shen X."/>
            <person name="Goh G."/>
            <person name="Zhu Y."/>
            <person name="Cui J."/>
            <person name="Wang L.F."/>
            <person name="Shi Z.L."/>
            <person name="Zhou P."/>
        </authorList>
    </citation>
    <scope>NUCLEOTIDE SEQUENCE [MRNA]</scope>
    <scope>FUNCTION</scope>
    <scope>MUTAGENESIS OF HIS-358</scope>
</reference>
<keyword id="KW-1003">Cell membrane</keyword>
<keyword id="KW-0963">Cytoplasm</keyword>
<keyword id="KW-0968">Cytoplasmic vesicle</keyword>
<keyword id="KW-0256">Endoplasmic reticulum</keyword>
<keyword id="KW-0333">Golgi apparatus</keyword>
<keyword id="KW-0391">Immunity</keyword>
<keyword id="KW-0399">Innate immunity</keyword>
<keyword id="KW-0407">Ion channel</keyword>
<keyword id="KW-0406">Ion transport</keyword>
<keyword id="KW-0449">Lipoprotein</keyword>
<keyword id="KW-0472">Membrane</keyword>
<keyword id="KW-0496">Mitochondrion</keyword>
<keyword id="KW-1000">Mitochondrion outer membrane</keyword>
<keyword id="KW-0547">Nucleotide-binding</keyword>
<keyword id="KW-0564">Palmitate</keyword>
<keyword id="KW-0597">Phosphoprotein</keyword>
<keyword id="KW-0812">Transmembrane</keyword>
<keyword id="KW-1133">Transmembrane helix</keyword>
<keyword id="KW-0813">Transport</keyword>
<feature type="chain" id="PRO_0000455458" description="Stimulator of interferon genes protein">
    <location>
        <begin position="1"/>
        <end position="379"/>
    </location>
</feature>
<feature type="transmembrane region" description="Helical" evidence="4">
    <location>
        <begin position="20"/>
        <end position="40"/>
    </location>
</feature>
<feature type="transmembrane region" description="Helical" evidence="4">
    <location>
        <begin position="87"/>
        <end position="107"/>
    </location>
</feature>
<feature type="transmembrane region" description="Helical" evidence="4">
    <location>
        <begin position="115"/>
        <end position="135"/>
    </location>
</feature>
<feature type="region of interest" description="Cyclic dinucleotide-binding domain (CBD)" evidence="3">
    <location>
        <begin position="153"/>
        <end position="340"/>
    </location>
</feature>
<feature type="region of interest" description="C-terminal tail (CTT)" evidence="3">
    <location>
        <begin position="340"/>
        <end position="379"/>
    </location>
</feature>
<feature type="short sequence motif" description="pLxIS motif" evidence="3">
    <location>
        <begin position="363"/>
        <end position="366"/>
    </location>
</feature>
<feature type="binding site" evidence="3">
    <location>
        <position position="162"/>
    </location>
    <ligand>
        <name>2',3'-cGAMP</name>
        <dbReference type="ChEBI" id="CHEBI:143093"/>
    </ligand>
</feature>
<feature type="binding site" evidence="3">
    <location>
        <position position="162"/>
    </location>
    <ligand>
        <name>3',3'-c-di-GMP</name>
        <dbReference type="ChEBI" id="CHEBI:58805"/>
    </ligand>
</feature>
<feature type="binding site" evidence="3">
    <location>
        <position position="167"/>
    </location>
    <ligand>
        <name>2',3'-cGAMP</name>
        <dbReference type="ChEBI" id="CHEBI:143093"/>
    </ligand>
</feature>
<feature type="binding site" evidence="3">
    <location>
        <position position="167"/>
    </location>
    <ligand>
        <name>2',3'-cUAMP</name>
        <dbReference type="ChEBI" id="CHEBI:228269"/>
    </ligand>
</feature>
<feature type="binding site" evidence="3">
    <location>
        <position position="167"/>
    </location>
    <ligand>
        <name>3',3'-c-di-GMP</name>
        <dbReference type="ChEBI" id="CHEBI:58805"/>
    </ligand>
</feature>
<feature type="binding site" evidence="3">
    <location>
        <begin position="238"/>
        <end position="241"/>
    </location>
    <ligand>
        <name>3',3'-c-di-GMP</name>
        <dbReference type="ChEBI" id="CHEBI:58805"/>
    </ligand>
</feature>
<feature type="binding site" evidence="3">
    <location>
        <position position="238"/>
    </location>
    <ligand>
        <name>2',3'-cGAMP</name>
        <dbReference type="ChEBI" id="CHEBI:143093"/>
    </ligand>
</feature>
<feature type="binding site" evidence="3">
    <location>
        <position position="238"/>
    </location>
    <ligand>
        <name>2',3'-cUAMP</name>
        <dbReference type="ChEBI" id="CHEBI:228269"/>
    </ligand>
</feature>
<feature type="binding site" evidence="3">
    <location>
        <position position="263"/>
    </location>
    <ligand>
        <name>2',3'-cGAMP</name>
        <dbReference type="ChEBI" id="CHEBI:143093"/>
    </ligand>
</feature>
<feature type="binding site" evidence="3">
    <location>
        <position position="263"/>
    </location>
    <ligand>
        <name>2',3'-cUAMP</name>
        <dbReference type="ChEBI" id="CHEBI:228269"/>
    </ligand>
</feature>
<feature type="binding site" evidence="3">
    <location>
        <position position="263"/>
    </location>
    <ligand>
        <name>3',3'-c-di-GMP</name>
        <dbReference type="ChEBI" id="CHEBI:58805"/>
    </ligand>
</feature>
<feature type="site" description="Not phosphorylated" evidence="5">
    <location>
        <position position="358"/>
    </location>
</feature>
<feature type="modified residue" description="Phosphoserine" evidence="3">
    <location>
        <position position="355"/>
    </location>
</feature>
<feature type="modified residue" description="Phosphothreonine" evidence="3">
    <location>
        <position position="356"/>
    </location>
</feature>
<feature type="modified residue" description="Phosphoserine; by TBK1" evidence="3">
    <location>
        <position position="366"/>
    </location>
</feature>
<feature type="lipid moiety-binding region" description="S-palmitoyl cysteine" evidence="2">
    <location>
        <position position="88"/>
    </location>
</feature>
<feature type="lipid moiety-binding region" description="S-palmitoyl cysteine" evidence="2">
    <location>
        <position position="91"/>
    </location>
</feature>
<feature type="mutagenesis site" description="Restores STING1 ability to induce a strong inflammatory response, resulting in type-I interferon activation and virus inhibition." evidence="5">
    <original>H</original>
    <variation>S</variation>
    <location>
        <position position="358"/>
    </location>
</feature>
<dbReference type="EMBL" id="MF174844">
    <property type="protein sequence ID" value="ATJ03487.1"/>
    <property type="molecule type" value="mRNA"/>
</dbReference>
<dbReference type="SMR" id="A0A291NUI5"/>
<dbReference type="GO" id="GO:0000421">
    <property type="term" value="C:autophagosome membrane"/>
    <property type="evidence" value="ECO:0007669"/>
    <property type="project" value="UniProtKB-SubCell"/>
</dbReference>
<dbReference type="GO" id="GO:0031410">
    <property type="term" value="C:cytoplasmic vesicle"/>
    <property type="evidence" value="ECO:0007669"/>
    <property type="project" value="UniProtKB-KW"/>
</dbReference>
<dbReference type="GO" id="GO:0005789">
    <property type="term" value="C:endoplasmic reticulum membrane"/>
    <property type="evidence" value="ECO:0007669"/>
    <property type="project" value="UniProtKB-SubCell"/>
</dbReference>
<dbReference type="GO" id="GO:0033116">
    <property type="term" value="C:endoplasmic reticulum-Golgi intermediate compartment membrane"/>
    <property type="evidence" value="ECO:0007669"/>
    <property type="project" value="UniProtKB-SubCell"/>
</dbReference>
<dbReference type="GO" id="GO:0000139">
    <property type="term" value="C:Golgi membrane"/>
    <property type="evidence" value="ECO:0007669"/>
    <property type="project" value="UniProtKB-SubCell"/>
</dbReference>
<dbReference type="GO" id="GO:0005741">
    <property type="term" value="C:mitochondrial outer membrane"/>
    <property type="evidence" value="ECO:0007669"/>
    <property type="project" value="UniProtKB-SubCell"/>
</dbReference>
<dbReference type="GO" id="GO:0048471">
    <property type="term" value="C:perinuclear region of cytoplasm"/>
    <property type="evidence" value="ECO:0007669"/>
    <property type="project" value="UniProtKB-SubCell"/>
</dbReference>
<dbReference type="GO" id="GO:0005886">
    <property type="term" value="C:plasma membrane"/>
    <property type="evidence" value="ECO:0007669"/>
    <property type="project" value="UniProtKB-SubCell"/>
</dbReference>
<dbReference type="GO" id="GO:0061507">
    <property type="term" value="F:2',3'-cyclic GMP-AMP binding"/>
    <property type="evidence" value="ECO:0007669"/>
    <property type="project" value="TreeGrafter"/>
</dbReference>
<dbReference type="GO" id="GO:0035438">
    <property type="term" value="F:cyclic-di-GMP binding"/>
    <property type="evidence" value="ECO:0007669"/>
    <property type="project" value="TreeGrafter"/>
</dbReference>
<dbReference type="GO" id="GO:0015252">
    <property type="term" value="F:proton channel activity"/>
    <property type="evidence" value="ECO:0000250"/>
    <property type="project" value="UniProtKB"/>
</dbReference>
<dbReference type="GO" id="GO:0035591">
    <property type="term" value="F:signaling adaptor activity"/>
    <property type="evidence" value="ECO:0000250"/>
    <property type="project" value="UniProtKB"/>
</dbReference>
<dbReference type="GO" id="GO:0000045">
    <property type="term" value="P:autophagosome assembly"/>
    <property type="evidence" value="ECO:0000250"/>
    <property type="project" value="UniProtKB"/>
</dbReference>
<dbReference type="GO" id="GO:0140896">
    <property type="term" value="P:cGAS/STING signaling pathway"/>
    <property type="evidence" value="ECO:0000250"/>
    <property type="project" value="UniProtKB"/>
</dbReference>
<dbReference type="GO" id="GO:0051607">
    <property type="term" value="P:defense response to virus"/>
    <property type="evidence" value="ECO:0007669"/>
    <property type="project" value="TreeGrafter"/>
</dbReference>
<dbReference type="GO" id="GO:0045087">
    <property type="term" value="P:innate immune response"/>
    <property type="evidence" value="ECO:0007669"/>
    <property type="project" value="UniProtKB-KW"/>
</dbReference>
<dbReference type="GO" id="GO:0016239">
    <property type="term" value="P:positive regulation of macroautophagy"/>
    <property type="evidence" value="ECO:0007669"/>
    <property type="project" value="TreeGrafter"/>
</dbReference>
<dbReference type="GO" id="GO:0032481">
    <property type="term" value="P:positive regulation of type I interferon production"/>
    <property type="evidence" value="ECO:0007669"/>
    <property type="project" value="InterPro"/>
</dbReference>
<dbReference type="GO" id="GO:0061709">
    <property type="term" value="P:reticulophagy"/>
    <property type="evidence" value="ECO:0007669"/>
    <property type="project" value="TreeGrafter"/>
</dbReference>
<dbReference type="CDD" id="cd22658">
    <property type="entry name" value="STING_C_metazoan-like"/>
    <property type="match status" value="1"/>
</dbReference>
<dbReference type="FunFam" id="1.20.5.5200:FF:000001">
    <property type="entry name" value="Stimulator of interferon genes protein"/>
    <property type="match status" value="1"/>
</dbReference>
<dbReference type="FunFam" id="3.40.50.12100:FF:000001">
    <property type="entry name" value="Stimulator of interferon genes protein"/>
    <property type="match status" value="1"/>
</dbReference>
<dbReference type="Gene3D" id="1.20.5.5200">
    <property type="match status" value="1"/>
</dbReference>
<dbReference type="Gene3D" id="3.40.50.12100">
    <property type="entry name" value="Stimulator of interferon genes protein"/>
    <property type="match status" value="1"/>
</dbReference>
<dbReference type="InterPro" id="IPR029158">
    <property type="entry name" value="STING"/>
</dbReference>
<dbReference type="InterPro" id="IPR047191">
    <property type="entry name" value="STING_C_chordates"/>
</dbReference>
<dbReference type="InterPro" id="IPR038623">
    <property type="entry name" value="STING_C_sf"/>
</dbReference>
<dbReference type="InterPro" id="IPR055432">
    <property type="entry name" value="STING_LBD"/>
</dbReference>
<dbReference type="InterPro" id="IPR055434">
    <property type="entry name" value="STING_TM"/>
</dbReference>
<dbReference type="PANTHER" id="PTHR34339">
    <property type="entry name" value="STIMULATOR OF INTERFERON GENES PROTEIN"/>
    <property type="match status" value="1"/>
</dbReference>
<dbReference type="PANTHER" id="PTHR34339:SF1">
    <property type="entry name" value="STIMULATOR OF INTERFERON GENES PROTEIN"/>
    <property type="match status" value="1"/>
</dbReference>
<dbReference type="Pfam" id="PF15009">
    <property type="entry name" value="STING_LBD"/>
    <property type="match status" value="1"/>
</dbReference>
<dbReference type="Pfam" id="PF23417">
    <property type="entry name" value="STING_TM"/>
    <property type="match status" value="1"/>
</dbReference>